<keyword id="KW-0025">Alternative splicing</keyword>
<keyword id="KW-0145">Chemotaxis</keyword>
<keyword id="KW-0202">Cytokine</keyword>
<keyword id="KW-0472">Membrane</keyword>
<keyword id="KW-1267">Proteomics identification</keyword>
<keyword id="KW-1185">Reference proteome</keyword>
<keyword id="KW-0964">Secreted</keyword>
<keyword id="KW-0812">Transmembrane</keyword>
<keyword id="KW-1133">Transmembrane helix</keyword>
<reference evidence="7" key="1">
    <citation type="journal article" date="2001" name="Biochem. J.">
        <title>Molecular cloning and characterization of chemokine-like factor 1 (CKLF1), a novel human cytokine with unique structure and potential chemotactic activity.</title>
        <authorList>
            <person name="Han W."/>
            <person name="Lou Y."/>
            <person name="Tang J."/>
            <person name="Zhang Y."/>
            <person name="Chen Y."/>
            <person name="Li Y."/>
            <person name="Gu W."/>
            <person name="Huang J."/>
            <person name="Gui L."/>
            <person name="Tang Y."/>
            <person name="Li F."/>
            <person name="Song Q."/>
            <person name="Di C."/>
            <person name="Wang L."/>
            <person name="Shi Q."/>
            <person name="Sun R."/>
            <person name="Xia D."/>
            <person name="Rui M."/>
            <person name="Tang J."/>
            <person name="Ma D."/>
        </authorList>
    </citation>
    <scope>NUCLEOTIDE SEQUENCE [MRNA] (ISOFORMS 1; 2; 3 AND 4)</scope>
    <scope>FUNCTION</scope>
    <scope>SUBCELLULAR LOCATION</scope>
    <scope>TISSUE SPECIFICITY</scope>
    <scope>ACTIVITY REGULATION</scope>
</reference>
<reference evidence="7" key="2">
    <citation type="submission" date="1998-04" db="EMBL/GenBank/DDBJ databases">
        <authorList>
            <person name="Zhang J.S."/>
            <person name="Nelson M."/>
            <person name="Wang L."/>
            <person name="Smith D.I."/>
        </authorList>
    </citation>
    <scope>NUCLEOTIDE SEQUENCE [MRNA] (ISOFORM 2)</scope>
    <source>
        <tissue evidence="7">Pancreas</tissue>
    </source>
</reference>
<reference evidence="7" key="3">
    <citation type="journal article" date="2000" name="Genome Res.">
        <title>Cloning and functional analysis of cDNAs with open reading frames for 300 previously undefined genes expressed in CD34+ hematopoietic stem/progenitor cells.</title>
        <authorList>
            <person name="Zhang Q.-H."/>
            <person name="Ye M."/>
            <person name="Wu X.-Y."/>
            <person name="Ren S.-X."/>
            <person name="Zhao M."/>
            <person name="Zhao C.-J."/>
            <person name="Fu G."/>
            <person name="Shen Y."/>
            <person name="Fan H.-Y."/>
            <person name="Lu G."/>
            <person name="Zhong M."/>
            <person name="Xu X.-R."/>
            <person name="Han Z.-G."/>
            <person name="Zhang J.-W."/>
            <person name="Tao J."/>
            <person name="Huang Q.-H."/>
            <person name="Zhou J."/>
            <person name="Hu G.-X."/>
            <person name="Gu J."/>
            <person name="Chen S.-J."/>
            <person name="Chen Z."/>
        </authorList>
    </citation>
    <scope>NUCLEOTIDE SEQUENCE [LARGE SCALE MRNA] (ISOFORM 2)</scope>
    <source>
        <tissue>Umbilical cord blood</tissue>
    </source>
</reference>
<reference key="4">
    <citation type="journal article" date="2003" name="Genome Res.">
        <title>The secreted protein discovery initiative (SPDI), a large-scale effort to identify novel human secreted and transmembrane proteins: a bioinformatics assessment.</title>
        <authorList>
            <person name="Clark H.F."/>
            <person name="Gurney A.L."/>
            <person name="Abaya E."/>
            <person name="Baker K."/>
            <person name="Baldwin D.T."/>
            <person name="Brush J."/>
            <person name="Chen J."/>
            <person name="Chow B."/>
            <person name="Chui C."/>
            <person name="Crowley C."/>
            <person name="Currell B."/>
            <person name="Deuel B."/>
            <person name="Dowd P."/>
            <person name="Eaton D."/>
            <person name="Foster J.S."/>
            <person name="Grimaldi C."/>
            <person name="Gu Q."/>
            <person name="Hass P.E."/>
            <person name="Heldens S."/>
            <person name="Huang A."/>
            <person name="Kim H.S."/>
            <person name="Klimowski L."/>
            <person name="Jin Y."/>
            <person name="Johnson S."/>
            <person name="Lee J."/>
            <person name="Lewis L."/>
            <person name="Liao D."/>
            <person name="Mark M.R."/>
            <person name="Robbie E."/>
            <person name="Sanchez C."/>
            <person name="Schoenfeld J."/>
            <person name="Seshagiri S."/>
            <person name="Simmons L."/>
            <person name="Singh J."/>
            <person name="Smith V."/>
            <person name="Stinson J."/>
            <person name="Vagts A."/>
            <person name="Vandlen R.L."/>
            <person name="Watanabe C."/>
            <person name="Wieand D."/>
            <person name="Woods K."/>
            <person name="Xie M.-H."/>
            <person name="Yansura D.G."/>
            <person name="Yi S."/>
            <person name="Yu G."/>
            <person name="Yuan J."/>
            <person name="Zhang M."/>
            <person name="Zhang Z."/>
            <person name="Goddard A.D."/>
            <person name="Wood W.I."/>
            <person name="Godowski P.J."/>
            <person name="Gray A.M."/>
        </authorList>
    </citation>
    <scope>NUCLEOTIDE SEQUENCE [LARGE SCALE MRNA] (ISOFORM 2)</scope>
</reference>
<reference evidence="7" key="5">
    <citation type="submission" date="2004-06" db="EMBL/GenBank/DDBJ databases">
        <authorList>
            <consortium name="SeattleSNPs variation discovery resource"/>
        </authorList>
    </citation>
    <scope>NUCLEOTIDE SEQUENCE [GENOMIC DNA]</scope>
</reference>
<reference key="6">
    <citation type="journal article" date="2004" name="Nature">
        <title>The sequence and analysis of duplication-rich human chromosome 16.</title>
        <authorList>
            <person name="Martin J."/>
            <person name="Han C."/>
            <person name="Gordon L.A."/>
            <person name="Terry A."/>
            <person name="Prabhakar S."/>
            <person name="She X."/>
            <person name="Xie G."/>
            <person name="Hellsten U."/>
            <person name="Chan Y.M."/>
            <person name="Altherr M."/>
            <person name="Couronne O."/>
            <person name="Aerts A."/>
            <person name="Bajorek E."/>
            <person name="Black S."/>
            <person name="Blumer H."/>
            <person name="Branscomb E."/>
            <person name="Brown N.C."/>
            <person name="Bruno W.J."/>
            <person name="Buckingham J.M."/>
            <person name="Callen D.F."/>
            <person name="Campbell C.S."/>
            <person name="Campbell M.L."/>
            <person name="Campbell E.W."/>
            <person name="Caoile C."/>
            <person name="Challacombe J.F."/>
            <person name="Chasteen L.A."/>
            <person name="Chertkov O."/>
            <person name="Chi H.C."/>
            <person name="Christensen M."/>
            <person name="Clark L.M."/>
            <person name="Cohn J.D."/>
            <person name="Denys M."/>
            <person name="Detter J.C."/>
            <person name="Dickson M."/>
            <person name="Dimitrijevic-Bussod M."/>
            <person name="Escobar J."/>
            <person name="Fawcett J.J."/>
            <person name="Flowers D."/>
            <person name="Fotopulos D."/>
            <person name="Glavina T."/>
            <person name="Gomez M."/>
            <person name="Gonzales E."/>
            <person name="Goodstein D."/>
            <person name="Goodwin L.A."/>
            <person name="Grady D.L."/>
            <person name="Grigoriev I."/>
            <person name="Groza M."/>
            <person name="Hammon N."/>
            <person name="Hawkins T."/>
            <person name="Haydu L."/>
            <person name="Hildebrand C.E."/>
            <person name="Huang W."/>
            <person name="Israni S."/>
            <person name="Jett J."/>
            <person name="Jewett P.B."/>
            <person name="Kadner K."/>
            <person name="Kimball H."/>
            <person name="Kobayashi A."/>
            <person name="Krawczyk M.-C."/>
            <person name="Leyba T."/>
            <person name="Longmire J.L."/>
            <person name="Lopez F."/>
            <person name="Lou Y."/>
            <person name="Lowry S."/>
            <person name="Ludeman T."/>
            <person name="Manohar C.F."/>
            <person name="Mark G.A."/>
            <person name="McMurray K.L."/>
            <person name="Meincke L.J."/>
            <person name="Morgan J."/>
            <person name="Moyzis R.K."/>
            <person name="Mundt M.O."/>
            <person name="Munk A.C."/>
            <person name="Nandkeshwar R.D."/>
            <person name="Pitluck S."/>
            <person name="Pollard M."/>
            <person name="Predki P."/>
            <person name="Parson-Quintana B."/>
            <person name="Ramirez L."/>
            <person name="Rash S."/>
            <person name="Retterer J."/>
            <person name="Ricke D.O."/>
            <person name="Robinson D.L."/>
            <person name="Rodriguez A."/>
            <person name="Salamov A."/>
            <person name="Saunders E.H."/>
            <person name="Scott D."/>
            <person name="Shough T."/>
            <person name="Stallings R.L."/>
            <person name="Stalvey M."/>
            <person name="Sutherland R.D."/>
            <person name="Tapia R."/>
            <person name="Tesmer J.G."/>
            <person name="Thayer N."/>
            <person name="Thompson L.S."/>
            <person name="Tice H."/>
            <person name="Torney D.C."/>
            <person name="Tran-Gyamfi M."/>
            <person name="Tsai M."/>
            <person name="Ulanovsky L.E."/>
            <person name="Ustaszewska A."/>
            <person name="Vo N."/>
            <person name="White P.S."/>
            <person name="Williams A.L."/>
            <person name="Wills P.L."/>
            <person name="Wu J.-R."/>
            <person name="Wu K."/>
            <person name="Yang J."/>
            <person name="DeJong P."/>
            <person name="Bruce D."/>
            <person name="Doggett N.A."/>
            <person name="Deaven L."/>
            <person name="Schmutz J."/>
            <person name="Grimwood J."/>
            <person name="Richardson P."/>
            <person name="Rokhsar D.S."/>
            <person name="Eichler E.E."/>
            <person name="Gilna P."/>
            <person name="Lucas S.M."/>
            <person name="Myers R.M."/>
            <person name="Rubin E.M."/>
            <person name="Pennacchio L.A."/>
        </authorList>
    </citation>
    <scope>NUCLEOTIDE SEQUENCE [LARGE SCALE GENOMIC DNA]</scope>
</reference>
<reference evidence="7" key="7">
    <citation type="journal article" date="2004" name="Genome Res.">
        <title>The status, quality, and expansion of the NIH full-length cDNA project: the Mammalian Gene Collection (MGC).</title>
        <authorList>
            <consortium name="The MGC Project Team"/>
        </authorList>
    </citation>
    <scope>NUCLEOTIDE SEQUENCE [LARGE SCALE MRNA] (ISOFORM 2)</scope>
    <source>
        <tissue evidence="9">Pancreas</tissue>
    </source>
</reference>
<reference key="8">
    <citation type="journal article" date="2006" name="Life Sci.">
        <title>Chemokine-like factor 1 is a functional ligand for CC chemokine receptor 4 (CCR4).</title>
        <authorList>
            <person name="Wang Y."/>
            <person name="Zhang Y."/>
            <person name="Yang X."/>
            <person name="Han W."/>
            <person name="Liu Y."/>
            <person name="Xu Q."/>
            <person name="Zhao R."/>
            <person name="Di C."/>
            <person name="Song Q."/>
            <person name="Ma D."/>
        </authorList>
    </citation>
    <scope>SUBCELLULAR LOCATION (ISOFORM 1)</scope>
    <scope>FUNCTION (ISOFORM 1)</scope>
</reference>
<name>CKLF_HUMAN</name>
<dbReference type="EMBL" id="AF135380">
    <property type="protein sequence ID" value="AAF19599.1"/>
    <property type="molecule type" value="mRNA"/>
</dbReference>
<dbReference type="EMBL" id="AF135381">
    <property type="protein sequence ID" value="AAF19600.1"/>
    <property type="molecule type" value="mRNA"/>
</dbReference>
<dbReference type="EMBL" id="AF145216">
    <property type="protein sequence ID" value="AAF19350.1"/>
    <property type="molecule type" value="mRNA"/>
</dbReference>
<dbReference type="EMBL" id="AF096895">
    <property type="protein sequence ID" value="AAF06722.1"/>
    <property type="molecule type" value="mRNA"/>
</dbReference>
<dbReference type="EMBL" id="AF057306">
    <property type="protein sequence ID" value="AAF21255.1"/>
    <property type="molecule type" value="mRNA"/>
</dbReference>
<dbReference type="EMBL" id="AF151058">
    <property type="protein sequence ID" value="AAF36144.1"/>
    <property type="molecule type" value="mRNA"/>
</dbReference>
<dbReference type="EMBL" id="AY358999">
    <property type="protein sequence ID" value="AAQ89358.1"/>
    <property type="molecule type" value="mRNA"/>
</dbReference>
<dbReference type="EMBL" id="AY665769">
    <property type="protein sequence ID" value="AAT70694.1"/>
    <property type="molecule type" value="Genomic_DNA"/>
</dbReference>
<dbReference type="EMBL" id="AC010542">
    <property type="status" value="NOT_ANNOTATED_CDS"/>
    <property type="molecule type" value="Genomic_DNA"/>
</dbReference>
<dbReference type="EMBL" id="BC004380">
    <property type="protein sequence ID" value="AAH04380.1"/>
    <property type="molecule type" value="mRNA"/>
</dbReference>
<dbReference type="CCDS" id="CCDS10806.1">
    <molecule id="Q9UBR5-3"/>
</dbReference>
<dbReference type="CCDS" id="CCDS10807.1">
    <molecule id="Q9UBR5-1"/>
</dbReference>
<dbReference type="CCDS" id="CCDS10808.1">
    <molecule id="Q9UBR5-2"/>
</dbReference>
<dbReference type="CCDS" id="CCDS10809.1">
    <molecule id="Q9UBR5-4"/>
</dbReference>
<dbReference type="CCDS" id="CCDS45502.1">
    <molecule id="Q9UBR5-5"/>
</dbReference>
<dbReference type="RefSeq" id="NP_001035228.1">
    <molecule id="Q9UBR5-5"/>
    <property type="nucleotide sequence ID" value="NM_001040138.3"/>
</dbReference>
<dbReference type="RefSeq" id="NP_057410.1">
    <molecule id="Q9UBR5-3"/>
    <property type="nucleotide sequence ID" value="NM_016326.3"/>
</dbReference>
<dbReference type="RefSeq" id="NP_058647.1">
    <molecule id="Q9UBR5-1"/>
    <property type="nucleotide sequence ID" value="NM_016951.4"/>
</dbReference>
<dbReference type="RefSeq" id="NP_857591.1">
    <molecule id="Q9UBR5-2"/>
    <property type="nucleotide sequence ID" value="NM_181640.2"/>
</dbReference>
<dbReference type="RefSeq" id="NP_857592.1">
    <molecule id="Q9UBR5-4"/>
    <property type="nucleotide sequence ID" value="NM_181641.2"/>
</dbReference>
<dbReference type="SMR" id="Q9UBR5"/>
<dbReference type="BioGRID" id="119366">
    <property type="interactions" value="5"/>
</dbReference>
<dbReference type="FunCoup" id="Q9UBR5">
    <property type="interactions" value="52"/>
</dbReference>
<dbReference type="IntAct" id="Q9UBR5">
    <property type="interactions" value="4"/>
</dbReference>
<dbReference type="STRING" id="9606.ENSP00000264001"/>
<dbReference type="iPTMnet" id="Q9UBR5"/>
<dbReference type="PhosphoSitePlus" id="Q9UBR5"/>
<dbReference type="SwissPalm" id="Q9UBR5"/>
<dbReference type="BioMuta" id="CKLF"/>
<dbReference type="DMDM" id="34098753"/>
<dbReference type="jPOST" id="Q9UBR5"/>
<dbReference type="MassIVE" id="Q9UBR5"/>
<dbReference type="PaxDb" id="9606-ENSP00000264001"/>
<dbReference type="PeptideAtlas" id="Q9UBR5"/>
<dbReference type="ProteomicsDB" id="84039">
    <molecule id="Q9UBR5-1"/>
</dbReference>
<dbReference type="ProteomicsDB" id="84040">
    <molecule id="Q9UBR5-2"/>
</dbReference>
<dbReference type="ProteomicsDB" id="84041">
    <molecule id="Q9UBR5-3"/>
</dbReference>
<dbReference type="ProteomicsDB" id="84042">
    <molecule id="Q9UBR5-4"/>
</dbReference>
<dbReference type="Pumba" id="Q9UBR5"/>
<dbReference type="Antibodypedia" id="29261">
    <property type="antibodies" value="124 antibodies from 22 providers"/>
</dbReference>
<dbReference type="DNASU" id="51192"/>
<dbReference type="Ensembl" id="ENST00000264001.9">
    <molecule id="Q9UBR5-1"/>
    <property type="protein sequence ID" value="ENSP00000264001.5"/>
    <property type="gene ID" value="ENSG00000217555.13"/>
</dbReference>
<dbReference type="Ensembl" id="ENST00000345436.8">
    <molecule id="Q9UBR5-4"/>
    <property type="protein sequence ID" value="ENSP00000290771.4"/>
    <property type="gene ID" value="ENSG00000217555.13"/>
</dbReference>
<dbReference type="Ensembl" id="ENST00000351137.8">
    <molecule id="Q9UBR5-2"/>
    <property type="protein sequence ID" value="ENSP00000264003.4"/>
    <property type="gene ID" value="ENSG00000217555.13"/>
</dbReference>
<dbReference type="Ensembl" id="ENST00000362093.4">
    <molecule id="Q9UBR5-3"/>
    <property type="protein sequence ID" value="ENSP00000355417.4"/>
    <property type="gene ID" value="ENSG00000217555.13"/>
</dbReference>
<dbReference type="Ensembl" id="ENST00000417030.2">
    <molecule id="Q9UBR5-5"/>
    <property type="protein sequence ID" value="ENSP00000416678.2"/>
    <property type="gene ID" value="ENSG00000217555.13"/>
</dbReference>
<dbReference type="GeneID" id="51192"/>
<dbReference type="KEGG" id="hsa:51192"/>
<dbReference type="MANE-Select" id="ENST00000264001.9">
    <property type="protein sequence ID" value="ENSP00000264001.5"/>
    <property type="RefSeq nucleotide sequence ID" value="NM_016951.4"/>
    <property type="RefSeq protein sequence ID" value="NP_058647.1"/>
</dbReference>
<dbReference type="UCSC" id="uc002eow.4">
    <molecule id="Q9UBR5-1"/>
    <property type="organism name" value="human"/>
</dbReference>
<dbReference type="AGR" id="HGNC:13253"/>
<dbReference type="CTD" id="51192"/>
<dbReference type="DisGeNET" id="51192"/>
<dbReference type="GeneCards" id="CKLF"/>
<dbReference type="HGNC" id="HGNC:13253">
    <property type="gene designation" value="CKLF"/>
</dbReference>
<dbReference type="HPA" id="ENSG00000217555">
    <property type="expression patterns" value="Low tissue specificity"/>
</dbReference>
<dbReference type="MIM" id="616074">
    <property type="type" value="gene"/>
</dbReference>
<dbReference type="neXtProt" id="NX_Q9UBR5"/>
<dbReference type="OpenTargets" id="ENSG00000217555"/>
<dbReference type="PharmGKB" id="PA26531"/>
<dbReference type="VEuPathDB" id="HostDB:ENSG00000217555"/>
<dbReference type="eggNOG" id="KOG4788">
    <property type="taxonomic scope" value="Eukaryota"/>
</dbReference>
<dbReference type="GeneTree" id="ENSGT00940000162264"/>
<dbReference type="HOGENOM" id="CLU_108546_3_0_1"/>
<dbReference type="InParanoid" id="Q9UBR5"/>
<dbReference type="OMA" id="CVLCIID"/>
<dbReference type="OrthoDB" id="5976667at2759"/>
<dbReference type="PAN-GO" id="Q9UBR5">
    <property type="GO annotations" value="1 GO annotation based on evolutionary models"/>
</dbReference>
<dbReference type="PhylomeDB" id="Q9UBR5"/>
<dbReference type="TreeFam" id="TF317387"/>
<dbReference type="PathwayCommons" id="Q9UBR5"/>
<dbReference type="SignaLink" id="Q9UBR5"/>
<dbReference type="BioGRID-ORCS" id="51192">
    <property type="hits" value="11 hits in 1134 CRISPR screens"/>
</dbReference>
<dbReference type="ChiTaRS" id="CKLF">
    <property type="organism name" value="human"/>
</dbReference>
<dbReference type="GeneWiki" id="CKLF_(gene)"/>
<dbReference type="GenomeRNAi" id="51192"/>
<dbReference type="Pharos" id="Q9UBR5">
    <property type="development level" value="Tbio"/>
</dbReference>
<dbReference type="PRO" id="PR:Q9UBR5"/>
<dbReference type="Proteomes" id="UP000005640">
    <property type="component" value="Chromosome 16"/>
</dbReference>
<dbReference type="RNAct" id="Q9UBR5">
    <property type="molecule type" value="protein"/>
</dbReference>
<dbReference type="Bgee" id="ENSG00000217555">
    <property type="expression patterns" value="Expressed in monocyte and 106 other cell types or tissues"/>
</dbReference>
<dbReference type="ExpressionAtlas" id="Q9UBR5">
    <property type="expression patterns" value="baseline and differential"/>
</dbReference>
<dbReference type="GO" id="GO:0005576">
    <property type="term" value="C:extracellular region"/>
    <property type="evidence" value="ECO:0000314"/>
    <property type="project" value="UniProtKB"/>
</dbReference>
<dbReference type="GO" id="GO:0005615">
    <property type="term" value="C:extracellular space"/>
    <property type="evidence" value="ECO:0007669"/>
    <property type="project" value="UniProtKB-KW"/>
</dbReference>
<dbReference type="GO" id="GO:0016020">
    <property type="term" value="C:membrane"/>
    <property type="evidence" value="ECO:0000314"/>
    <property type="project" value="UniProtKB"/>
</dbReference>
<dbReference type="GO" id="GO:0008009">
    <property type="term" value="F:chemokine activity"/>
    <property type="evidence" value="ECO:0000314"/>
    <property type="project" value="UniProtKB"/>
</dbReference>
<dbReference type="GO" id="GO:0048247">
    <property type="term" value="P:lymphocyte chemotaxis"/>
    <property type="evidence" value="ECO:0000314"/>
    <property type="project" value="UniProtKB"/>
</dbReference>
<dbReference type="GO" id="GO:0048246">
    <property type="term" value="P:macrophage chemotaxis"/>
    <property type="evidence" value="ECO:0000314"/>
    <property type="project" value="UniProtKB"/>
</dbReference>
<dbReference type="GO" id="GO:0030593">
    <property type="term" value="P:neutrophil chemotaxis"/>
    <property type="evidence" value="ECO:0000314"/>
    <property type="project" value="UniProtKB"/>
</dbReference>
<dbReference type="GO" id="GO:0032940">
    <property type="term" value="P:secretion by cell"/>
    <property type="evidence" value="ECO:0000314"/>
    <property type="project" value="UniProtKB"/>
</dbReference>
<dbReference type="InterPro" id="IPR008253">
    <property type="entry name" value="Marvel"/>
</dbReference>
<dbReference type="InterPro" id="IPR050578">
    <property type="entry name" value="MARVEL-CKLF_proteins"/>
</dbReference>
<dbReference type="PANTHER" id="PTHR22776:SF45">
    <property type="entry name" value="CHEMOKINE-LIKE FACTOR"/>
    <property type="match status" value="1"/>
</dbReference>
<dbReference type="PANTHER" id="PTHR22776">
    <property type="entry name" value="MARVEL-CONTAINING POTENTIAL LIPID RAFT-ASSOCIATED PROTEIN"/>
    <property type="match status" value="1"/>
</dbReference>
<dbReference type="PROSITE" id="PS51225">
    <property type="entry name" value="MARVEL"/>
    <property type="match status" value="1"/>
</dbReference>
<gene>
    <name type="primary">CKLF</name>
    <name type="synonym">CKLF1</name>
    <name type="ORF">HSPC224</name>
    <name type="ORF">UNQ410/PRO772</name>
</gene>
<sequence>MDNVQPKIKHRPFCFSVKGHVKMLRLALTVTSMTFFIIAQAPEPYIVITGFEVTVILFFILLYVLRLDRLMKWLFWPLLDIINSLVTTVFMLIVSVLALIPETTTLTVGGGVFALVTAVCCLADGALIYRKLLFNPSGPYQKKPVHEKKEVL</sequence>
<protein>
    <recommendedName>
        <fullName>Chemokine-like factor</fullName>
    </recommendedName>
    <alternativeName>
        <fullName>C32</fullName>
    </alternativeName>
</protein>
<comment type="function">
    <text evidence="1 4">May play an important role in inflammation and regeneration of skeletal muscle (PubMed:11415443). Essential for embryonic development (By similarity).</text>
</comment>
<comment type="function">
    <molecule>Isoform 1</molecule>
    <text evidence="4 5">Has chemotactic response in monocytes, neutrophils and lymphocytes (PubMed:11415443). Binds CCR4 (PubMed:16137713).</text>
</comment>
<comment type="activity regulation">
    <text evidence="4">Partly inhibited by interleukin 10.</text>
</comment>
<comment type="interaction">
    <interactant intactId="EBI-17572009">
        <id>Q9UBR5</id>
    </interactant>
    <interactant intactId="EBI-910915">
        <id>O75581</id>
        <label>LRP6</label>
    </interactant>
    <organismsDiffer>false</organismsDiffer>
    <experiments>3</experiments>
</comment>
<comment type="subcellular location">
    <molecule>Isoform 1</molecule>
    <subcellularLocation>
        <location evidence="4 5">Secreted</location>
    </subcellularLocation>
</comment>
<comment type="subcellular location">
    <molecule>Isoform 2</molecule>
    <subcellularLocation>
        <location evidence="7">Membrane</location>
        <topology evidence="7">Multi-pass membrane protein</topology>
    </subcellularLocation>
</comment>
<comment type="subcellular location">
    <molecule>Isoform 4</molecule>
    <subcellularLocation>
        <location evidence="7">Membrane</location>
        <topology evidence="7">Multi-pass membrane protein</topology>
    </subcellularLocation>
</comment>
<comment type="alternative products">
    <event type="alternative splicing"/>
    <isoform>
        <id>Q9UBR5-1</id>
        <name>2</name>
        <name evidence="4">CKLF2</name>
        <sequence type="displayed"/>
    </isoform>
    <isoform>
        <id>Q9UBR5-2</id>
        <name>1</name>
        <name evidence="4">CKLF1</name>
        <sequence type="described" ref="VSP_050605"/>
    </isoform>
    <isoform>
        <id>Q9UBR5-3</id>
        <name>3</name>
        <name evidence="4">CKLF3</name>
        <sequence type="described" ref="VSP_050605 VSP_050606"/>
    </isoform>
    <isoform>
        <id>Q9UBR5-4</id>
        <name>4</name>
        <name evidence="4">CKLF4</name>
        <sequence type="described" ref="VSP_050606"/>
    </isoform>
    <isoform>
        <id>Q9UBR5-5</id>
        <name>5</name>
        <sequence type="described" ref="VSP_041445 VSP_041446"/>
    </isoform>
</comment>
<comment type="tissue specificity">
    <text evidence="4">Isoform 1, isoform 2, isoform 3 and isoform 4 have highest expression levels in adult spleen, lung, testis, ovary, peripheral blood leukocyte, placenta, pancreas, and in fetal brain, skeletal muscle, thymus and heart. Lower expression levels in adult skeletal muscle, liver, thymus colon, prostate and fetal spleen and liver.</text>
</comment>
<comment type="similarity">
    <text evidence="7">Belongs to the chemokine-like factor family.</text>
</comment>
<organism evidence="8">
    <name type="scientific">Homo sapiens</name>
    <name type="common">Human</name>
    <dbReference type="NCBI Taxonomy" id="9606"/>
    <lineage>
        <taxon>Eukaryota</taxon>
        <taxon>Metazoa</taxon>
        <taxon>Chordata</taxon>
        <taxon>Craniata</taxon>
        <taxon>Vertebrata</taxon>
        <taxon>Euteleostomi</taxon>
        <taxon>Mammalia</taxon>
        <taxon>Eutheria</taxon>
        <taxon>Euarchontoglires</taxon>
        <taxon>Primates</taxon>
        <taxon>Haplorrhini</taxon>
        <taxon>Catarrhini</taxon>
        <taxon>Hominidae</taxon>
        <taxon>Homo</taxon>
    </lineage>
</organism>
<accession>Q9UBR5</accession>
<accession>C9JE38</accession>
<accession>Q9UHM7</accession>
<accession>Q9UHN8</accession>
<accession>Q9UI41</accession>
<proteinExistence type="evidence at protein level"/>
<evidence type="ECO:0000250" key="1">
    <source>
        <dbReference type="UniProtKB" id="Q9DAS1"/>
    </source>
</evidence>
<evidence type="ECO:0000255" key="2"/>
<evidence type="ECO:0000255" key="3">
    <source>
        <dbReference type="PROSITE-ProRule" id="PRU00581"/>
    </source>
</evidence>
<evidence type="ECO:0000269" key="4">
    <source>
    </source>
</evidence>
<evidence type="ECO:0000269" key="5">
    <source>
    </source>
</evidence>
<evidence type="ECO:0000303" key="6">
    <source>
    </source>
</evidence>
<evidence type="ECO:0000305" key="7"/>
<evidence type="ECO:0000312" key="8">
    <source>
        <dbReference type="EMBL" id="AAF36144.1"/>
    </source>
</evidence>
<evidence type="ECO:0000312" key="9">
    <source>
        <dbReference type="EMBL" id="AAH04380.1"/>
    </source>
</evidence>
<feature type="chain" id="PRO_0000186094" description="Chemokine-like factor">
    <location>
        <begin position="1"/>
        <end position="152"/>
    </location>
</feature>
<feature type="transmembrane region" description="Helical" evidence="2">
    <location>
        <begin position="45"/>
        <end position="65"/>
    </location>
</feature>
<feature type="transmembrane region" description="Helical" evidence="2">
    <location>
        <begin position="81"/>
        <end position="101"/>
    </location>
</feature>
<feature type="transmembrane region" description="Helical" evidence="2">
    <location>
        <begin position="108"/>
        <end position="128"/>
    </location>
</feature>
<feature type="domain" description="MARVEL" evidence="3">
    <location>
        <begin position="13"/>
        <end position="133"/>
    </location>
</feature>
<feature type="splice variant" id="VSP_050605" description="In isoform 1 and isoform 3." evidence="6">
    <location>
        <begin position="27"/>
        <end position="79"/>
    </location>
</feature>
<feature type="splice variant" id="VSP_050606" description="In isoform 4 and isoform 3." evidence="6">
    <location>
        <begin position="80"/>
        <end position="111"/>
    </location>
</feature>
<feature type="splice variant" id="VSP_041445" description="In isoform 5." evidence="7">
    <original>VF</original>
    <variation>LF</variation>
    <location>
        <begin position="112"/>
        <end position="113"/>
    </location>
</feature>
<feature type="splice variant" id="VSP_041446" description="In isoform 5." evidence="7">
    <location>
        <begin position="114"/>
        <end position="152"/>
    </location>
</feature>